<name>SH3BG_HUMAN</name>
<evidence type="ECO:0000255" key="1"/>
<evidence type="ECO:0000256" key="2">
    <source>
        <dbReference type="SAM" id="MobiDB-lite"/>
    </source>
</evidence>
<evidence type="ECO:0000269" key="3">
    <source>
    </source>
</evidence>
<evidence type="ECO:0000269" key="4">
    <source ref="3"/>
</evidence>
<evidence type="ECO:0000303" key="5">
    <source>
    </source>
</evidence>
<evidence type="ECO:0000305" key="6"/>
<comment type="interaction">
    <interactant intactId="EBI-2654794">
        <id>P55822</id>
    </interactant>
    <interactant intactId="EBI-521595">
        <id>Q8IZD4</id>
        <label>DCP1B</label>
    </interactant>
    <organismsDiffer>false</organismsDiffer>
    <experiments>2</experiments>
</comment>
<comment type="alternative products">
    <event type="alternative splicing"/>
    <isoform>
        <id>P55822-1</id>
        <name>1</name>
        <sequence type="displayed"/>
    </isoform>
    <isoform>
        <id>P55822-2</id>
        <name>2</name>
        <sequence type="described" ref="VSP_045788"/>
    </isoform>
</comment>
<comment type="tissue specificity">
    <text>Expressed in heart and skeletal muscle.</text>
</comment>
<comment type="similarity">
    <text evidence="6">Belongs to the SH3BGR family.</text>
</comment>
<comment type="caution">
    <text evidence="6">It is uncertain whether Met-1 or Met-64 is the initiator.</text>
</comment>
<protein>
    <recommendedName>
        <fullName>SH3 domain-binding glutamic acid-rich protein</fullName>
        <shortName>SH3BGR protein</shortName>
    </recommendedName>
    <alternativeName>
        <fullName>21-glutamic acid-rich protein</fullName>
        <shortName>21-GARP</shortName>
    </alternativeName>
</protein>
<feature type="chain" id="PRO_0000220743" description="SH3 domain-binding glutamic acid-rich protein">
    <location>
        <begin position="1"/>
        <end position="239"/>
    </location>
</feature>
<feature type="region of interest" description="Disordered" evidence="2">
    <location>
        <begin position="159"/>
        <end position="239"/>
    </location>
</feature>
<feature type="short sequence motif" description="SH3-binding" evidence="1">
    <location>
        <begin position="124"/>
        <end position="130"/>
    </location>
</feature>
<feature type="compositionally biased region" description="Basic and acidic residues" evidence="2">
    <location>
        <begin position="167"/>
        <end position="185"/>
    </location>
</feature>
<feature type="compositionally biased region" description="Acidic residues" evidence="2">
    <location>
        <begin position="198"/>
        <end position="239"/>
    </location>
</feature>
<feature type="splice variant" id="VSP_045788" description="In isoform 2." evidence="5">
    <location>
        <begin position="1"/>
        <end position="111"/>
    </location>
</feature>
<feature type="sequence variant" id="VAR_057182" description="In dbSNP:rs11575939." evidence="3">
    <original>D</original>
    <variation>E</variation>
    <location>
        <position position="23"/>
    </location>
</feature>
<feature type="sequence variant" id="VAR_057183" description="In dbSNP:rs6517549." evidence="3 4">
    <original>D</original>
    <variation>N</variation>
    <location>
        <position position="50"/>
    </location>
</feature>
<feature type="sequence variant" id="VAR_028233" description="In dbSNP:rs9974333." evidence="3">
    <original>V</original>
    <variation>A</variation>
    <location>
        <position position="188"/>
    </location>
</feature>
<feature type="sequence conflict" description="In Ref. 4; BM474020." evidence="6" ref="4">
    <original>E</original>
    <variation>EE</variation>
    <location>
        <position position="232"/>
    </location>
</feature>
<proteinExistence type="evidence at protein level"/>
<organism>
    <name type="scientific">Homo sapiens</name>
    <name type="common">Human</name>
    <dbReference type="NCBI Taxonomy" id="9606"/>
    <lineage>
        <taxon>Eukaryota</taxon>
        <taxon>Metazoa</taxon>
        <taxon>Chordata</taxon>
        <taxon>Craniata</taxon>
        <taxon>Vertebrata</taxon>
        <taxon>Euteleostomi</taxon>
        <taxon>Mammalia</taxon>
        <taxon>Eutheria</taxon>
        <taxon>Euarchontoglires</taxon>
        <taxon>Primates</taxon>
        <taxon>Haplorrhini</taxon>
        <taxon>Catarrhini</taxon>
        <taxon>Hominidae</taxon>
        <taxon>Homo</taxon>
    </lineage>
</organism>
<dbReference type="EMBL" id="X93498">
    <property type="protein sequence ID" value="CAB57259.1"/>
    <property type="molecule type" value="mRNA"/>
</dbReference>
<dbReference type="EMBL" id="AL163279">
    <property type="protein sequence ID" value="CAB90456.1"/>
    <property type="molecule type" value="Genomic_DNA"/>
</dbReference>
<dbReference type="EMBL" id="AL163280">
    <property type="protein sequence ID" value="CAB90445.1"/>
    <property type="molecule type" value="Genomic_DNA"/>
</dbReference>
<dbReference type="EMBL" id="AF121781">
    <property type="protein sequence ID" value="AAD12067.1"/>
    <property type="molecule type" value="Genomic_DNA"/>
</dbReference>
<dbReference type="EMBL" id="AF121897">
    <property type="status" value="NOT_ANNOTATED_CDS"/>
    <property type="molecule type" value="Genomic_DNA"/>
</dbReference>
<dbReference type="EMBL" id="CH471079">
    <property type="protein sequence ID" value="EAX09638.1"/>
    <property type="molecule type" value="Genomic_DNA"/>
</dbReference>
<dbReference type="EMBL" id="CH471079">
    <property type="protein sequence ID" value="EAX09639.1"/>
    <property type="molecule type" value="Genomic_DNA"/>
</dbReference>
<dbReference type="EMBL" id="CH471079">
    <property type="protein sequence ID" value="EAX09640.1"/>
    <property type="molecule type" value="Genomic_DNA"/>
</dbReference>
<dbReference type="EMBL" id="BC006371">
    <property type="protein sequence ID" value="AAH06371.1"/>
    <property type="molecule type" value="mRNA"/>
</dbReference>
<dbReference type="EMBL" id="BM474020">
    <property type="status" value="NOT_ANNOTATED_CDS"/>
    <property type="molecule type" value="mRNA"/>
</dbReference>
<dbReference type="CCDS" id="CCDS33560.1">
    <molecule id="P55822-2"/>
</dbReference>
<dbReference type="RefSeq" id="NP_001001713.1">
    <molecule id="P55822-2"/>
    <property type="nucleotide sequence ID" value="NM_001001713.1"/>
</dbReference>
<dbReference type="RefSeq" id="NP_001304671.1">
    <molecule id="P55822-2"/>
    <property type="nucleotide sequence ID" value="NM_001317742.1"/>
</dbReference>
<dbReference type="RefSeq" id="NP_031367.1">
    <property type="nucleotide sequence ID" value="NM_007341.2"/>
</dbReference>
<dbReference type="SMR" id="P55822"/>
<dbReference type="BioGRID" id="112348">
    <property type="interactions" value="9"/>
</dbReference>
<dbReference type="FunCoup" id="P55822">
    <property type="interactions" value="341"/>
</dbReference>
<dbReference type="IntAct" id="P55822">
    <property type="interactions" value="5"/>
</dbReference>
<dbReference type="STRING" id="9606.ENSP00000332513"/>
<dbReference type="iPTMnet" id="P55822"/>
<dbReference type="PhosphoSitePlus" id="P55822"/>
<dbReference type="BioMuta" id="SH3BGR"/>
<dbReference type="DMDM" id="215274184"/>
<dbReference type="jPOST" id="P55822"/>
<dbReference type="MassIVE" id="P55822"/>
<dbReference type="PaxDb" id="9606-ENSP00000332513"/>
<dbReference type="PeptideAtlas" id="P55822"/>
<dbReference type="ProteomicsDB" id="56872">
    <molecule id="P55822-1"/>
</dbReference>
<dbReference type="ProteomicsDB" id="883"/>
<dbReference type="Pumba" id="P55822"/>
<dbReference type="Antibodypedia" id="23450">
    <property type="antibodies" value="195 antibodies from 28 providers"/>
</dbReference>
<dbReference type="DNASU" id="6450"/>
<dbReference type="Ensembl" id="ENST00000380631.5">
    <molecule id="P55822-2"/>
    <property type="protein sequence ID" value="ENSP00000370005.1"/>
    <property type="gene ID" value="ENSG00000185437.16"/>
</dbReference>
<dbReference type="Ensembl" id="ENST00000380634.5">
    <molecule id="P55822-2"/>
    <property type="protein sequence ID" value="ENSP00000370008.1"/>
    <property type="gene ID" value="ENSG00000185437.16"/>
</dbReference>
<dbReference type="Ensembl" id="ENST00000380637.7">
    <molecule id="P55822-2"/>
    <property type="protein sequence ID" value="ENSP00000370011.3"/>
    <property type="gene ID" value="ENSG00000185437.16"/>
</dbReference>
<dbReference type="GeneID" id="6450"/>
<dbReference type="KEGG" id="hsa:6450"/>
<dbReference type="UCSC" id="uc002yxz.4">
    <molecule id="P55822-1"/>
    <property type="organism name" value="human"/>
</dbReference>
<dbReference type="AGR" id="HGNC:10822"/>
<dbReference type="CTD" id="6450"/>
<dbReference type="DisGeNET" id="6450"/>
<dbReference type="GeneCards" id="SH3BGR"/>
<dbReference type="HGNC" id="HGNC:10822">
    <property type="gene designation" value="SH3BGR"/>
</dbReference>
<dbReference type="HPA" id="ENSG00000185437">
    <property type="expression patterns" value="Group enriched (skeletal muscle, tongue)"/>
</dbReference>
<dbReference type="MIM" id="602230">
    <property type="type" value="gene"/>
</dbReference>
<dbReference type="neXtProt" id="NX_P55822"/>
<dbReference type="OpenTargets" id="ENSG00000185437"/>
<dbReference type="PharmGKB" id="PA35730"/>
<dbReference type="VEuPathDB" id="HostDB:ENSG00000185437"/>
<dbReference type="eggNOG" id="KOG4023">
    <property type="taxonomic scope" value="Eukaryota"/>
</dbReference>
<dbReference type="GeneTree" id="ENSGT00940000159847"/>
<dbReference type="HOGENOM" id="CLU_084862_0_1_1"/>
<dbReference type="InParanoid" id="P55822"/>
<dbReference type="OMA" id="FNEKEYC"/>
<dbReference type="OrthoDB" id="9932926at2759"/>
<dbReference type="PAN-GO" id="P55822">
    <property type="GO annotations" value="0 GO annotations based on evolutionary models"/>
</dbReference>
<dbReference type="PhylomeDB" id="P55822"/>
<dbReference type="TreeFam" id="TF105574"/>
<dbReference type="PathwayCommons" id="P55822"/>
<dbReference type="SignaLink" id="P55822"/>
<dbReference type="BioGRID-ORCS" id="6450">
    <property type="hits" value="8 hits in 1153 CRISPR screens"/>
</dbReference>
<dbReference type="GeneWiki" id="SH3BGR"/>
<dbReference type="GenomeRNAi" id="6450"/>
<dbReference type="Pharos" id="P55822">
    <property type="development level" value="Tbio"/>
</dbReference>
<dbReference type="PRO" id="PR:P55822"/>
<dbReference type="Proteomes" id="UP000005640">
    <property type="component" value="Chromosome 21"/>
</dbReference>
<dbReference type="RNAct" id="P55822">
    <property type="molecule type" value="protein"/>
</dbReference>
<dbReference type="Bgee" id="ENSG00000185437">
    <property type="expression patterns" value="Expressed in gastrocnemius and 98 other cell types or tissues"/>
</dbReference>
<dbReference type="ExpressionAtlas" id="P55822">
    <property type="expression patterns" value="baseline and differential"/>
</dbReference>
<dbReference type="GO" id="GO:0005737">
    <property type="term" value="C:cytoplasm"/>
    <property type="evidence" value="ECO:0000318"/>
    <property type="project" value="GO_Central"/>
</dbReference>
<dbReference type="GO" id="GO:0017124">
    <property type="term" value="F:SH3 domain binding"/>
    <property type="evidence" value="ECO:0007669"/>
    <property type="project" value="UniProtKB-KW"/>
</dbReference>
<dbReference type="CDD" id="cd03030">
    <property type="entry name" value="GRX_SH3BGR"/>
    <property type="match status" value="1"/>
</dbReference>
<dbReference type="FunFam" id="3.40.30.10:FF:000065">
    <property type="entry name" value="SH3 domain-binding glutamic acid-rich-like protein"/>
    <property type="match status" value="1"/>
</dbReference>
<dbReference type="Gene3D" id="3.40.30.10">
    <property type="entry name" value="Glutaredoxin"/>
    <property type="match status" value="1"/>
</dbReference>
<dbReference type="InterPro" id="IPR006993">
    <property type="entry name" value="Glut_rich_SH3-bd"/>
</dbReference>
<dbReference type="InterPro" id="IPR051033">
    <property type="entry name" value="SH3BGR"/>
</dbReference>
<dbReference type="InterPro" id="IPR036249">
    <property type="entry name" value="Thioredoxin-like_sf"/>
</dbReference>
<dbReference type="PANTHER" id="PTHR12232:SF1">
    <property type="entry name" value="SH3 DOMAIN-BINDING GLUTAMIC ACID-RICH PROTEIN"/>
    <property type="match status" value="1"/>
</dbReference>
<dbReference type="PANTHER" id="PTHR12232">
    <property type="entry name" value="SH3 DOMAIN-BINDING GLUTAMIC ACID-RICH-LIKE PROTEIN"/>
    <property type="match status" value="1"/>
</dbReference>
<dbReference type="Pfam" id="PF04908">
    <property type="entry name" value="SH3BGR"/>
    <property type="match status" value="1"/>
</dbReference>
<dbReference type="SUPFAM" id="SSF52833">
    <property type="entry name" value="Thioredoxin-like"/>
    <property type="match status" value="1"/>
</dbReference>
<accession>P55822</accession>
<accession>A6ND59</accession>
<accession>D3DSI2</accession>
<accession>Q9BRB8</accession>
<gene>
    <name type="primary">SH3BGR</name>
</gene>
<reference key="1">
    <citation type="journal article" date="1997" name="Hum. Genet.">
        <title>Cloning a new human gene from chromosome 21q22.3 encoding a glutamic acid-rich protein expressed in heart and skeletal muscle.</title>
        <authorList>
            <person name="Scartezzini P."/>
            <person name="Egeo A."/>
            <person name="Colella S."/>
            <person name="Fumagalli P."/>
            <person name="Arrigo P."/>
            <person name="Nizetic D."/>
            <person name="Taramelli R."/>
            <person name="Rasore-Quartino A."/>
        </authorList>
    </citation>
    <scope>NUCLEOTIDE SEQUENCE [MRNA] (ISOFORM 1)</scope>
    <source>
        <tissue>Heart</tissue>
    </source>
</reference>
<reference key="2">
    <citation type="journal article" date="2000" name="Nature">
        <title>The DNA sequence of human chromosome 21.</title>
        <authorList>
            <person name="Hattori M."/>
            <person name="Fujiyama A."/>
            <person name="Taylor T.D."/>
            <person name="Watanabe H."/>
            <person name="Yada T."/>
            <person name="Park H.-S."/>
            <person name="Toyoda A."/>
            <person name="Ishii K."/>
            <person name="Totoki Y."/>
            <person name="Choi D.-K."/>
            <person name="Groner Y."/>
            <person name="Soeda E."/>
            <person name="Ohki M."/>
            <person name="Takagi T."/>
            <person name="Sakaki Y."/>
            <person name="Taudien S."/>
            <person name="Blechschmidt K."/>
            <person name="Polley A."/>
            <person name="Menzel U."/>
            <person name="Delabar J."/>
            <person name="Kumpf K."/>
            <person name="Lehmann R."/>
            <person name="Patterson D."/>
            <person name="Reichwald K."/>
            <person name="Rump A."/>
            <person name="Schillhabel M."/>
            <person name="Schudy A."/>
            <person name="Zimmermann W."/>
            <person name="Rosenthal A."/>
            <person name="Kudoh J."/>
            <person name="Shibuya K."/>
            <person name="Kawasaki K."/>
            <person name="Asakawa S."/>
            <person name="Shintani A."/>
            <person name="Sasaki T."/>
            <person name="Nagamine K."/>
            <person name="Mitsuyama S."/>
            <person name="Antonarakis S.E."/>
            <person name="Minoshima S."/>
            <person name="Shimizu N."/>
            <person name="Nordsiek G."/>
            <person name="Hornischer K."/>
            <person name="Brandt P."/>
            <person name="Scharfe M."/>
            <person name="Schoen O."/>
            <person name="Desario A."/>
            <person name="Reichelt J."/>
            <person name="Kauer G."/>
            <person name="Bloecker H."/>
            <person name="Ramser J."/>
            <person name="Beck A."/>
            <person name="Klages S."/>
            <person name="Hennig S."/>
            <person name="Riesselmann L."/>
            <person name="Dagand E."/>
            <person name="Wehrmeyer S."/>
            <person name="Borzym K."/>
            <person name="Gardiner K."/>
            <person name="Nizetic D."/>
            <person name="Francis F."/>
            <person name="Lehrach H."/>
            <person name="Reinhardt R."/>
            <person name="Yaspo M.-L."/>
        </authorList>
    </citation>
    <scope>NUCLEOTIDE SEQUENCE [LARGE SCALE GENOMIC DNA]</scope>
</reference>
<reference key="3">
    <citation type="submission" date="2005-09" db="EMBL/GenBank/DDBJ databases">
        <authorList>
            <person name="Mural R.J."/>
            <person name="Istrail S."/>
            <person name="Sutton G.G."/>
            <person name="Florea L."/>
            <person name="Halpern A.L."/>
            <person name="Mobarry C.M."/>
            <person name="Lippert R."/>
            <person name="Walenz B."/>
            <person name="Shatkay H."/>
            <person name="Dew I."/>
            <person name="Miller J.R."/>
            <person name="Flanigan M.J."/>
            <person name="Edwards N.J."/>
            <person name="Bolanos R."/>
            <person name="Fasulo D."/>
            <person name="Halldorsson B.V."/>
            <person name="Hannenhalli S."/>
            <person name="Turner R."/>
            <person name="Yooseph S."/>
            <person name="Lu F."/>
            <person name="Nusskern D.R."/>
            <person name="Shue B.C."/>
            <person name="Zheng X.H."/>
            <person name="Zhong F."/>
            <person name="Delcher A.L."/>
            <person name="Huson D.H."/>
            <person name="Kravitz S.A."/>
            <person name="Mouchard L."/>
            <person name="Reinert K."/>
            <person name="Remington K.A."/>
            <person name="Clark A.G."/>
            <person name="Waterman M.S."/>
            <person name="Eichler E.E."/>
            <person name="Adams M.D."/>
            <person name="Hunkapiller M.W."/>
            <person name="Myers E.W."/>
            <person name="Venter J.C."/>
        </authorList>
    </citation>
    <scope>NUCLEOTIDE SEQUENCE [LARGE SCALE GENOMIC DNA]</scope>
    <scope>VARIANT ASN-50</scope>
</reference>
<reference key="4">
    <citation type="journal article" date="2004" name="Genome Res.">
        <title>The status, quality, and expansion of the NIH full-length cDNA project: the Mammalian Gene Collection (MGC).</title>
        <authorList>
            <consortium name="The MGC Project Team"/>
        </authorList>
    </citation>
    <scope>NUCLEOTIDE SEQUENCE [LARGE SCALE MRNA] (ISOFORMS 1 AND 2)</scope>
    <scope>VARIANTS GLU-23; ASN-50 AND ALA-188</scope>
    <source>
        <tissue>Leiomyosarcoma</tissue>
        <tissue>Muscle</tissue>
    </source>
</reference>
<sequence>MPLLLLGETEPLKLERDCRSPVDPWAAASPDLALACLCHCQDLSSGAFPDRGVLGGVLFPTVEMVIKVFVATSSGSIAIRKKQQEVVGFLEANKIDFKELDIAGDEDNRRWMRENVPGEKKPQNGIPLPPQIFNEEQYCGDFDSFFSAKEENIIYSFLGLAPPPDSKGSEKAEEGGETEAQKEGSEDVGNLPEAQEKNEEEGETATEETEEIAMEGAEGEAEEEEETAEGEEPGEDEDS</sequence>
<keyword id="KW-0025">Alternative splicing</keyword>
<keyword id="KW-1267">Proteomics identification</keyword>
<keyword id="KW-1185">Reference proteome</keyword>
<keyword id="KW-0729">SH3-binding</keyword>